<organism>
    <name type="scientific">Homo sapiens</name>
    <name type="common">Human</name>
    <dbReference type="NCBI Taxonomy" id="9606"/>
    <lineage>
        <taxon>Eukaryota</taxon>
        <taxon>Metazoa</taxon>
        <taxon>Chordata</taxon>
        <taxon>Craniata</taxon>
        <taxon>Vertebrata</taxon>
        <taxon>Euteleostomi</taxon>
        <taxon>Mammalia</taxon>
        <taxon>Eutheria</taxon>
        <taxon>Euarchontoglires</taxon>
        <taxon>Primates</taxon>
        <taxon>Haplorrhini</taxon>
        <taxon>Catarrhini</taxon>
        <taxon>Hominidae</taxon>
        <taxon>Homo</taxon>
    </lineage>
</organism>
<keyword id="KW-1003">Cell membrane</keyword>
<keyword id="KW-0966">Cell projection</keyword>
<keyword id="KW-0969">Cilium</keyword>
<keyword id="KW-0221">Differentiation</keyword>
<keyword id="KW-0282">Flagellum</keyword>
<keyword id="KW-0472">Membrane</keyword>
<keyword id="KW-1267">Proteomics identification</keyword>
<keyword id="KW-1185">Reference proteome</keyword>
<keyword id="KW-0744">Spermatogenesis</keyword>
<accession>Q9NTU4</accession>
<name>CTSRZ_HUMAN</name>
<comment type="function">
    <text evidence="2">Auxiliary component of the CatSper complex, a complex involved in sperm cell hyperactivation. Sperm cell hyperactivation is needed for sperm motility which is essential late in the preparation of sperm for fertilization. Required for a distribution of the CatSper complex in linear quadrilateral nanodomains along the flagellum, maximizing fertilization inside the mammalian female reproductive tract. Together with EFCAB9, associates with the CatSper channel pore and is required for the two-row structure of each single CatSper channel.</text>
</comment>
<comment type="subunit">
    <text evidence="1 2">Component of the CatSper complex or CatSpermasome composed of the core pore-forming members CATSPER1, CATSPER2, CATSPER3 and CATSPER4 as well as auxiliary members CATSPERB, CATSPERG, CATSPERD, CATSPERE, CATSPERZ, C2CD6/CATSPERT, TMEM249, TMEM262 and EFCAB9 (By similarity). HSPA1 may be an additional auxiliary complex member (By similarity). The core complex members CATSPER1, CATSPER2, CATSPER3 and CATSPER4 form a heterotetrameric channel (By similarity). The auxiliary CATSPERB, CATSPERG, CATSPERD and CATSPERE subunits form a pavilion-like structure over the pore which stabilizes the complex through interactions with CATSPER4, CATSPER3, CATSPER1 and CATSPER2 respectively (By similarity). TMEM262/CATSPERH interacts with CATSPERB, further stabilizing the complex. C2CD6/CATSPERT interacts at least with CATSPERD and is required for targeting the CatSper complex in the flagellar membrane (By similarity). Interacts with EFCAB9; the interaction is direct, Ca(2+)-dependent and connects EFCAB9 with the CatSper complex (By similarity). Dissociates from EFCAB9 at elevated pH (By similarity).</text>
</comment>
<comment type="subcellular location">
    <subcellularLocation>
        <location evidence="4">Cell projection</location>
        <location evidence="4">Cilium</location>
        <location evidence="4">Flagellum membrane</location>
        <topology evidence="5">Peripheral membrane protein</topology>
    </subcellularLocation>
    <text evidence="4">Specifically located in the principal piece of sperm tail (PubMed:28226241). Although it does not contain a transmembrane domain, localizes with the CatSper complex at the flagellum membrane (PubMed:28226241).</text>
</comment>
<comment type="caution">
    <text evidence="6">A report observed N-glycosylation at Asn-58 (PubMed:19139490). However, as the protein is not predicted to localize in an extracellular compartment of the cell, additional evidence is required to confirm this result.</text>
</comment>
<comment type="caution">
    <text evidence="5">In mouse, Slco6c1 is an additional auxiliary subunit of the CatSper complex. It is unclear if the related SLCO6A1 protein performs the same role in non-rodent species.</text>
</comment>
<protein>
    <recommendedName>
        <fullName evidence="7">Cation channel sperm-associated auxiliary subunit zeta</fullName>
        <shortName evidence="2">CatSper-zeta</shortName>
        <shortName evidence="2">CatSperzeta</shortName>
    </recommendedName>
    <alternativeName>
        <fullName evidence="7">Testis-expressed protein 40</fullName>
    </alternativeName>
</protein>
<gene>
    <name evidence="7" type="primary">CATSPERZ</name>
    <name evidence="7" type="synonym">C11orf20</name>
    <name evidence="7" type="synonym">TEX40</name>
</gene>
<reference key="1">
    <citation type="journal article" date="2001" name="Genome Res.">
        <title>Towards a catalog of human genes and proteins: sequencing and analysis of 500 novel complete protein coding human cDNAs.</title>
        <authorList>
            <person name="Wiemann S."/>
            <person name="Weil B."/>
            <person name="Wellenreuther R."/>
            <person name="Gassenhuber J."/>
            <person name="Glassl S."/>
            <person name="Ansorge W."/>
            <person name="Boecher M."/>
            <person name="Bloecker H."/>
            <person name="Bauersachs S."/>
            <person name="Blum H."/>
            <person name="Lauber J."/>
            <person name="Duesterhoeft A."/>
            <person name="Beyer A."/>
            <person name="Koehrer K."/>
            <person name="Strack N."/>
            <person name="Mewes H.-W."/>
            <person name="Ottenwaelder B."/>
            <person name="Obermaier B."/>
            <person name="Tampe J."/>
            <person name="Heubner D."/>
            <person name="Wambutt R."/>
            <person name="Korn B."/>
            <person name="Klein M."/>
            <person name="Poustka A."/>
        </authorList>
    </citation>
    <scope>NUCLEOTIDE SEQUENCE [LARGE SCALE MRNA]</scope>
    <source>
        <tissue>Kidney</tissue>
    </source>
</reference>
<reference key="2">
    <citation type="journal article" date="2009" name="Mol. Cell. Proteomics">
        <title>A strategy for precise and large scale identification of core fucosylated glycoproteins.</title>
        <authorList>
            <person name="Jia W."/>
            <person name="Lu Z."/>
            <person name="Fu Y."/>
            <person name="Wang H.P."/>
            <person name="Wang L.H."/>
            <person name="Chi H."/>
            <person name="Yuan Z.F."/>
            <person name="Zheng Z.B."/>
            <person name="Song L.N."/>
            <person name="Han H.H."/>
            <person name="Liang Y.M."/>
            <person name="Wang J.L."/>
            <person name="Cai Y."/>
            <person name="Zhang Y.K."/>
            <person name="Deng Y.L."/>
            <person name="Ying W.T."/>
            <person name="He S.M."/>
            <person name="Qian X.H."/>
        </authorList>
    </citation>
    <scope>IDENTIFICATION</scope>
</reference>
<reference key="3">
    <citation type="journal article" date="2017" name="Elife">
        <title>CatSperzeta regulates the structural continuity of sperm Ca(2+) signaling domains and is required for normal fertility.</title>
        <authorList>
            <person name="Chung J.J."/>
            <person name="Miki K."/>
            <person name="Kim D."/>
            <person name="Shim S.H."/>
            <person name="Shi H.F."/>
            <person name="Hwang J.Y."/>
            <person name="Cai X."/>
            <person name="Iseri Y."/>
            <person name="Zhuang X."/>
            <person name="Clapham D.E."/>
        </authorList>
    </citation>
    <scope>SUBCELLULAR LOCATION</scope>
</reference>
<evidence type="ECO:0000250" key="1">
    <source>
        <dbReference type="UniProtKB" id="Q91ZR5"/>
    </source>
</evidence>
<evidence type="ECO:0000250" key="2">
    <source>
        <dbReference type="UniProtKB" id="Q9CQP8"/>
    </source>
</evidence>
<evidence type="ECO:0000256" key="3">
    <source>
        <dbReference type="SAM" id="MobiDB-lite"/>
    </source>
</evidence>
<evidence type="ECO:0000269" key="4">
    <source>
    </source>
</evidence>
<evidence type="ECO:0000305" key="5"/>
<evidence type="ECO:0000305" key="6">
    <source>
    </source>
</evidence>
<evidence type="ECO:0000312" key="7">
    <source>
        <dbReference type="HGNC" id="HGNC:19231"/>
    </source>
</evidence>
<dbReference type="EMBL" id="AL117564">
    <property type="protein sequence ID" value="CAB55995.2"/>
    <property type="molecule type" value="mRNA"/>
</dbReference>
<dbReference type="PIR" id="T17305">
    <property type="entry name" value="T17305"/>
</dbReference>
<dbReference type="RefSeq" id="NP_001034585.1">
    <property type="nucleotide sequence ID" value="NM_001039496.2"/>
</dbReference>
<dbReference type="SMR" id="Q9NTU4"/>
<dbReference type="BioGRID" id="307941">
    <property type="interactions" value="3"/>
</dbReference>
<dbReference type="ComplexPortal" id="CPX-9165">
    <property type="entry name" value="CatSpermasome complex"/>
</dbReference>
<dbReference type="FunCoup" id="Q9NTU4">
    <property type="interactions" value="7"/>
</dbReference>
<dbReference type="IntAct" id="Q9NTU4">
    <property type="interactions" value="3"/>
</dbReference>
<dbReference type="STRING" id="9606.ENSP00000491717"/>
<dbReference type="TCDB" id="1.A.1.19.1">
    <property type="family name" value="the voltage-gated ion channel (vic) superfamily"/>
</dbReference>
<dbReference type="GlyGen" id="Q9NTU4">
    <property type="glycosylation" value="1 site, 1 O-linked glycan (1 site)"/>
</dbReference>
<dbReference type="iPTMnet" id="Q9NTU4"/>
<dbReference type="PhosphoSitePlus" id="Q9NTU4"/>
<dbReference type="BioMuta" id="CATSPERZ"/>
<dbReference type="DMDM" id="74719331"/>
<dbReference type="MassIVE" id="Q9NTU4"/>
<dbReference type="PaxDb" id="9606-ENSP00000443917"/>
<dbReference type="PeptideAtlas" id="Q9NTU4"/>
<dbReference type="ProteomicsDB" id="82631"/>
<dbReference type="Antibodypedia" id="66419">
    <property type="antibodies" value="34 antibodies from 11 providers"/>
</dbReference>
<dbReference type="DNASU" id="25858"/>
<dbReference type="Ensembl" id="ENST00000328404.8">
    <property type="protein sequence ID" value="ENSP00000491717.1"/>
    <property type="gene ID" value="ENSG00000219435.6"/>
</dbReference>
<dbReference type="GeneID" id="25858"/>
<dbReference type="KEGG" id="hsa:25858"/>
<dbReference type="MANE-Select" id="ENST00000328404.8">
    <property type="protein sequence ID" value="ENSP00000491717.1"/>
    <property type="RefSeq nucleotide sequence ID" value="NM_001039496.2"/>
    <property type="RefSeq protein sequence ID" value="NP_001034585.1"/>
</dbReference>
<dbReference type="AGR" id="HGNC:19231"/>
<dbReference type="CTD" id="25858"/>
<dbReference type="DisGeNET" id="25858"/>
<dbReference type="GeneCards" id="CATSPERZ"/>
<dbReference type="HGNC" id="HGNC:19231">
    <property type="gene designation" value="CATSPERZ"/>
</dbReference>
<dbReference type="HPA" id="ENSG00000219435">
    <property type="expression patterns" value="Tissue enriched (testis)"/>
</dbReference>
<dbReference type="MIM" id="617511">
    <property type="type" value="gene"/>
</dbReference>
<dbReference type="neXtProt" id="NX_Q9NTU4"/>
<dbReference type="OpenTargets" id="ENSG00000219435"/>
<dbReference type="PharmGKB" id="PA164716726"/>
<dbReference type="VEuPathDB" id="HostDB:ENSG00000219435"/>
<dbReference type="eggNOG" id="ENOG502RU31">
    <property type="taxonomic scope" value="Eukaryota"/>
</dbReference>
<dbReference type="GeneTree" id="ENSGT00400000022853"/>
<dbReference type="InParanoid" id="Q9NTU4"/>
<dbReference type="OMA" id="SHKPEEM"/>
<dbReference type="OrthoDB" id="9451709at2759"/>
<dbReference type="PAN-GO" id="Q9NTU4">
    <property type="GO annotations" value="4 GO annotations based on evolutionary models"/>
</dbReference>
<dbReference type="PhylomeDB" id="Q9NTU4"/>
<dbReference type="PathwayCommons" id="Q9NTU4"/>
<dbReference type="SignaLink" id="Q9NTU4"/>
<dbReference type="BioGRID-ORCS" id="25858">
    <property type="hits" value="17 hits in 278 CRISPR screens"/>
</dbReference>
<dbReference type="Pharos" id="Q9NTU4">
    <property type="development level" value="Tdark"/>
</dbReference>
<dbReference type="PRO" id="PR:Q9NTU4"/>
<dbReference type="Proteomes" id="UP000005640">
    <property type="component" value="Chromosome 11"/>
</dbReference>
<dbReference type="RNAct" id="Q9NTU4">
    <property type="molecule type" value="protein"/>
</dbReference>
<dbReference type="Bgee" id="ENSG00000219435">
    <property type="expression patterns" value="Expressed in left testis and 94 other cell types or tissues"/>
</dbReference>
<dbReference type="ExpressionAtlas" id="Q9NTU4">
    <property type="expression patterns" value="baseline and differential"/>
</dbReference>
<dbReference type="GO" id="GO:0036128">
    <property type="term" value="C:CatSper complex"/>
    <property type="evidence" value="ECO:0000250"/>
    <property type="project" value="UniProtKB"/>
</dbReference>
<dbReference type="GO" id="GO:0005737">
    <property type="term" value="C:cytoplasm"/>
    <property type="evidence" value="ECO:0000314"/>
    <property type="project" value="LIFEdb"/>
</dbReference>
<dbReference type="GO" id="GO:0097228">
    <property type="term" value="C:sperm principal piece"/>
    <property type="evidence" value="ECO:0000314"/>
    <property type="project" value="UniProtKB"/>
</dbReference>
<dbReference type="GO" id="GO:0030317">
    <property type="term" value="P:flagellated sperm motility"/>
    <property type="evidence" value="ECO:0000250"/>
    <property type="project" value="UniProtKB"/>
</dbReference>
<dbReference type="GO" id="GO:0007140">
    <property type="term" value="P:male meiotic nuclear division"/>
    <property type="evidence" value="ECO:0000250"/>
    <property type="project" value="UniProtKB"/>
</dbReference>
<dbReference type="GO" id="GO:0048240">
    <property type="term" value="P:sperm capacitation"/>
    <property type="evidence" value="ECO:0000250"/>
    <property type="project" value="UniProtKB"/>
</dbReference>
<dbReference type="GO" id="GO:0007283">
    <property type="term" value="P:spermatogenesis"/>
    <property type="evidence" value="ECO:0000250"/>
    <property type="project" value="UniProtKB"/>
</dbReference>
<dbReference type="InterPro" id="IPR039019">
    <property type="entry name" value="CATSPERZ"/>
</dbReference>
<dbReference type="PANTHER" id="PTHR42155:SF1">
    <property type="entry name" value="CATION CHANNEL SPERM-ASSOCIATED AUXILIARY SUBUNIT ZETA"/>
    <property type="match status" value="1"/>
</dbReference>
<dbReference type="PANTHER" id="PTHR42155">
    <property type="entry name" value="CATION CHANNEL SPERM-ASSOCIATED PROTEIN SUBUNIT ZETA"/>
    <property type="match status" value="1"/>
</dbReference>
<sequence>MEEKPSKVSLKSSDRQGSDEESVHSDTRDLWTTTTLSQAQLNMPLSEVCEGFDEEGRNISKTRGWHSPGRGSLDEGYKASHKPEELDEHALVELELHRGSSMEINLGEKDTASQIEAEKSSSMSSLNIAKHMPHRAYWAEQQSRLPLPLMELMENEALEILTKALRSYQLGIGRDHFLTKELQRYIEGLKKRRSKRLYVN</sequence>
<proteinExistence type="evidence at protein level"/>
<feature type="chain" id="PRO_0000349322" description="Cation channel sperm-associated auxiliary subunit zeta">
    <location>
        <begin position="1"/>
        <end position="200"/>
    </location>
</feature>
<feature type="region of interest" description="Disordered" evidence="3">
    <location>
        <begin position="1"/>
        <end position="31"/>
    </location>
</feature>
<feature type="region of interest" description="Disordered" evidence="3">
    <location>
        <begin position="58"/>
        <end position="78"/>
    </location>
</feature>
<feature type="compositionally biased region" description="Basic and acidic residues" evidence="3">
    <location>
        <begin position="1"/>
        <end position="29"/>
    </location>
</feature>
<feature type="sequence variant" id="VAR_046370" description="In dbSNP:rs2286614.">
    <original>P</original>
    <variation>L</variation>
    <location>
        <position position="68"/>
    </location>
</feature>